<keyword id="KW-0249">Electron transport</keyword>
<keyword id="KW-0349">Heme</keyword>
<keyword id="KW-0408">Iron</keyword>
<keyword id="KW-0472">Membrane</keyword>
<keyword id="KW-0479">Metal-binding</keyword>
<keyword id="KW-0496">Mitochondrion</keyword>
<keyword id="KW-0999">Mitochondrion inner membrane</keyword>
<keyword id="KW-1185">Reference proteome</keyword>
<keyword id="KW-0679">Respiratory chain</keyword>
<keyword id="KW-0812">Transmembrane</keyword>
<keyword id="KW-1133">Transmembrane helix</keyword>
<keyword id="KW-0813">Transport</keyword>
<keyword id="KW-0830">Ubiquinone</keyword>
<comment type="function">
    <text evidence="2">Component of the ubiquinol-cytochrome c reductase complex (complex III or cytochrome b-c1 complex) that is part of the mitochondrial respiratory chain. The b-c1 complex mediates electron transfer from ubiquinol to cytochrome c. Contributes to the generation of a proton gradient across the mitochondrial membrane that is then used for ATP synthesis.</text>
</comment>
<comment type="cofactor">
    <cofactor evidence="2">
        <name>heme b</name>
        <dbReference type="ChEBI" id="CHEBI:60344"/>
    </cofactor>
    <text evidence="2">Binds 2 heme b groups non-covalently.</text>
</comment>
<comment type="subunit">
    <text evidence="2">The cytochrome bc1 complex contains 11 subunits: 3 respiratory subunits (MT-CYB, CYC1 and UQCRFS1), 2 core proteins (UQCRC1 and UQCRC2) and 6 low-molecular weight proteins (UQCRH/QCR6, UQCRB/QCR7, UQCRQ/QCR8, UQCR10/QCR9, UQCR11/QCR10 and a cleavage product of UQCRFS1). This cytochrome bc1 complex then forms a dimer.</text>
</comment>
<comment type="subcellular location">
    <subcellularLocation>
        <location evidence="2">Mitochondrion inner membrane</location>
        <topology evidence="2">Multi-pass membrane protein</topology>
    </subcellularLocation>
</comment>
<comment type="miscellaneous">
    <text evidence="1">Heme 1 (or BL or b562) is low-potential and absorbs at about 562 nm, and heme 2 (or BH or b566) is high-potential and absorbs at about 566 nm.</text>
</comment>
<comment type="similarity">
    <text evidence="3 4">Belongs to the cytochrome b family.</text>
</comment>
<comment type="caution">
    <text evidence="2">The full-length protein contains only eight transmembrane helices, not nine as predicted by bioinformatics tools.</text>
</comment>
<gene>
    <name type="primary">MT-CYB</name>
    <name type="synonym">COB</name>
    <name type="synonym">CYTB</name>
    <name type="synonym">MTCYB</name>
</gene>
<sequence length="379" mass="42760">MTNIRKTHPLMKIVNESFIDLPTPSNISAWWNFGSLLGMCLIIQIATGLFLAMHYTSDTTTAFSSVAHICRDVNYGWLIRYLHANGASMFFICLFLHVGRGLYYGSYTFIETWNIGILLLFAVMATAFMGYVLPWGQMSFWGATVITNLLSAIPYIGTTLVEWIWGGFSVDKATLTRFFAFHFILPFIVAALAVVHLLFLHETGSNNPIGLNSDADKNPLHPYYTIKTALGFLLMFLVLLSLVLFCPDMLGDPDNYMPANPLNTPPHIKPEWYFLFAYAILRSIPNKLGGVVALVLSILILAIVPFLHNSKQRSMIFRPISQCMYWLLMADLLTLTWIGGQPVEHPFIIIGQIASILYFTIILILMPLSSMLENKILKW</sequence>
<evidence type="ECO:0000250" key="1"/>
<evidence type="ECO:0000250" key="2">
    <source>
        <dbReference type="UniProtKB" id="P00157"/>
    </source>
</evidence>
<evidence type="ECO:0000255" key="3">
    <source>
        <dbReference type="PROSITE-ProRule" id="PRU00967"/>
    </source>
</evidence>
<evidence type="ECO:0000255" key="4">
    <source>
        <dbReference type="PROSITE-ProRule" id="PRU00968"/>
    </source>
</evidence>
<feature type="chain" id="PRO_0000257908" description="Cytochrome b">
    <location>
        <begin position="1"/>
        <end position="379"/>
    </location>
</feature>
<feature type="transmembrane region" description="Helical" evidence="2">
    <location>
        <begin position="33"/>
        <end position="53"/>
    </location>
</feature>
<feature type="transmembrane region" description="Helical" evidence="2">
    <location>
        <begin position="77"/>
        <end position="98"/>
    </location>
</feature>
<feature type="transmembrane region" description="Helical" evidence="2">
    <location>
        <begin position="113"/>
        <end position="133"/>
    </location>
</feature>
<feature type="transmembrane region" description="Helical" evidence="2">
    <location>
        <begin position="178"/>
        <end position="198"/>
    </location>
</feature>
<feature type="transmembrane region" description="Helical" evidence="2">
    <location>
        <begin position="226"/>
        <end position="246"/>
    </location>
</feature>
<feature type="transmembrane region" description="Helical" evidence="2">
    <location>
        <begin position="288"/>
        <end position="308"/>
    </location>
</feature>
<feature type="transmembrane region" description="Helical" evidence="2">
    <location>
        <begin position="320"/>
        <end position="340"/>
    </location>
</feature>
<feature type="transmembrane region" description="Helical" evidence="2">
    <location>
        <begin position="347"/>
        <end position="367"/>
    </location>
</feature>
<feature type="binding site" description="axial binding residue" evidence="2">
    <location>
        <position position="83"/>
    </location>
    <ligand>
        <name>heme b</name>
        <dbReference type="ChEBI" id="CHEBI:60344"/>
        <label>b562</label>
    </ligand>
    <ligandPart>
        <name>Fe</name>
        <dbReference type="ChEBI" id="CHEBI:18248"/>
    </ligandPart>
</feature>
<feature type="binding site" description="axial binding residue" evidence="2">
    <location>
        <position position="97"/>
    </location>
    <ligand>
        <name>heme b</name>
        <dbReference type="ChEBI" id="CHEBI:60344"/>
        <label>b566</label>
    </ligand>
    <ligandPart>
        <name>Fe</name>
        <dbReference type="ChEBI" id="CHEBI:18248"/>
    </ligandPart>
</feature>
<feature type="binding site" description="axial binding residue" evidence="2">
    <location>
        <position position="182"/>
    </location>
    <ligand>
        <name>heme b</name>
        <dbReference type="ChEBI" id="CHEBI:60344"/>
        <label>b562</label>
    </ligand>
    <ligandPart>
        <name>Fe</name>
        <dbReference type="ChEBI" id="CHEBI:18248"/>
    </ligandPart>
</feature>
<feature type="binding site" description="axial binding residue" evidence="2">
    <location>
        <position position="196"/>
    </location>
    <ligand>
        <name>heme b</name>
        <dbReference type="ChEBI" id="CHEBI:60344"/>
        <label>b566</label>
    </ligand>
    <ligandPart>
        <name>Fe</name>
        <dbReference type="ChEBI" id="CHEBI:18248"/>
    </ligandPart>
</feature>
<feature type="binding site" evidence="2">
    <location>
        <position position="201"/>
    </location>
    <ligand>
        <name>a ubiquinone</name>
        <dbReference type="ChEBI" id="CHEBI:16389"/>
    </ligand>
</feature>
<reference key="1">
    <citation type="submission" date="2001-10" db="EMBL/GenBank/DDBJ databases">
        <title>Rodent phylogeny based on complete mitochondrial genomes.</title>
        <authorList>
            <person name="Reyes A."/>
            <person name="Gissi C."/>
            <person name="Catzeflis F."/>
            <person name="Nevo E."/>
            <person name="Pesole G."/>
            <person name="Saccone C."/>
        </authorList>
    </citation>
    <scope>NUCLEOTIDE SEQUENCE [GENOMIC DNA]</scope>
</reference>
<name>CYB_JACJA</name>
<protein>
    <recommendedName>
        <fullName>Cytochrome b</fullName>
    </recommendedName>
    <alternativeName>
        <fullName>Complex III subunit 3</fullName>
    </alternativeName>
    <alternativeName>
        <fullName>Complex III subunit III</fullName>
    </alternativeName>
    <alternativeName>
        <fullName>Cytochrome b-c1 complex subunit 3</fullName>
    </alternativeName>
    <alternativeName>
        <fullName>Ubiquinol-cytochrome-c reductase complex cytochrome b subunit</fullName>
    </alternativeName>
</protein>
<proteinExistence type="inferred from homology"/>
<dbReference type="EMBL" id="AJ416890">
    <property type="protein sequence ID" value="CAC95209.1"/>
    <property type="molecule type" value="Genomic_DNA"/>
</dbReference>
<dbReference type="RefSeq" id="NP_955678.1">
    <property type="nucleotide sequence ID" value="NC_005314.1"/>
</dbReference>
<dbReference type="SMR" id="Q710S3"/>
<dbReference type="Ensembl" id="ENSJJAT00000000035.1">
    <property type="protein sequence ID" value="ENSJJAP00000000013.1"/>
    <property type="gene ID" value="ENSJJAG00000000035.1"/>
</dbReference>
<dbReference type="GeneID" id="2715033"/>
<dbReference type="CTD" id="4519"/>
<dbReference type="GeneTree" id="ENSGT00390000017948"/>
<dbReference type="OMA" id="NISAWWN"/>
<dbReference type="Proteomes" id="UP000694385">
    <property type="component" value="Unassembled WGS sequence"/>
</dbReference>
<dbReference type="GO" id="GO:0005743">
    <property type="term" value="C:mitochondrial inner membrane"/>
    <property type="evidence" value="ECO:0007669"/>
    <property type="project" value="UniProtKB-SubCell"/>
</dbReference>
<dbReference type="GO" id="GO:0045275">
    <property type="term" value="C:respiratory chain complex III"/>
    <property type="evidence" value="ECO:0007669"/>
    <property type="project" value="InterPro"/>
</dbReference>
<dbReference type="GO" id="GO:0046872">
    <property type="term" value="F:metal ion binding"/>
    <property type="evidence" value="ECO:0007669"/>
    <property type="project" value="UniProtKB-KW"/>
</dbReference>
<dbReference type="GO" id="GO:0008121">
    <property type="term" value="F:ubiquinol-cytochrome-c reductase activity"/>
    <property type="evidence" value="ECO:0007669"/>
    <property type="project" value="InterPro"/>
</dbReference>
<dbReference type="GO" id="GO:0006122">
    <property type="term" value="P:mitochondrial electron transport, ubiquinol to cytochrome c"/>
    <property type="evidence" value="ECO:0007669"/>
    <property type="project" value="TreeGrafter"/>
</dbReference>
<dbReference type="CDD" id="cd00290">
    <property type="entry name" value="cytochrome_b_C"/>
    <property type="match status" value="1"/>
</dbReference>
<dbReference type="CDD" id="cd00284">
    <property type="entry name" value="Cytochrome_b_N"/>
    <property type="match status" value="1"/>
</dbReference>
<dbReference type="FunFam" id="1.20.810.10:FF:000002">
    <property type="entry name" value="Cytochrome b"/>
    <property type="match status" value="1"/>
</dbReference>
<dbReference type="Gene3D" id="1.20.810.10">
    <property type="entry name" value="Cytochrome Bc1 Complex, Chain C"/>
    <property type="match status" value="1"/>
</dbReference>
<dbReference type="InterPro" id="IPR005798">
    <property type="entry name" value="Cyt_b/b6_C"/>
</dbReference>
<dbReference type="InterPro" id="IPR036150">
    <property type="entry name" value="Cyt_b/b6_C_sf"/>
</dbReference>
<dbReference type="InterPro" id="IPR005797">
    <property type="entry name" value="Cyt_b/b6_N"/>
</dbReference>
<dbReference type="InterPro" id="IPR027387">
    <property type="entry name" value="Cytb/b6-like_sf"/>
</dbReference>
<dbReference type="InterPro" id="IPR030689">
    <property type="entry name" value="Cytochrome_b"/>
</dbReference>
<dbReference type="InterPro" id="IPR048260">
    <property type="entry name" value="Cytochrome_b_C_euk/bac"/>
</dbReference>
<dbReference type="InterPro" id="IPR048259">
    <property type="entry name" value="Cytochrome_b_N_euk/bac"/>
</dbReference>
<dbReference type="InterPro" id="IPR016174">
    <property type="entry name" value="Di-haem_cyt_TM"/>
</dbReference>
<dbReference type="PANTHER" id="PTHR19271">
    <property type="entry name" value="CYTOCHROME B"/>
    <property type="match status" value="1"/>
</dbReference>
<dbReference type="PANTHER" id="PTHR19271:SF16">
    <property type="entry name" value="CYTOCHROME B"/>
    <property type="match status" value="1"/>
</dbReference>
<dbReference type="Pfam" id="PF00032">
    <property type="entry name" value="Cytochrom_B_C"/>
    <property type="match status" value="1"/>
</dbReference>
<dbReference type="Pfam" id="PF00033">
    <property type="entry name" value="Cytochrome_B"/>
    <property type="match status" value="1"/>
</dbReference>
<dbReference type="PIRSF" id="PIRSF038885">
    <property type="entry name" value="COB"/>
    <property type="match status" value="1"/>
</dbReference>
<dbReference type="SUPFAM" id="SSF81648">
    <property type="entry name" value="a domain/subunit of cytochrome bc1 complex (Ubiquinol-cytochrome c reductase)"/>
    <property type="match status" value="1"/>
</dbReference>
<dbReference type="SUPFAM" id="SSF81342">
    <property type="entry name" value="Transmembrane di-heme cytochromes"/>
    <property type="match status" value="1"/>
</dbReference>
<dbReference type="PROSITE" id="PS51003">
    <property type="entry name" value="CYTB_CTER"/>
    <property type="match status" value="1"/>
</dbReference>
<dbReference type="PROSITE" id="PS51002">
    <property type="entry name" value="CYTB_NTER"/>
    <property type="match status" value="1"/>
</dbReference>
<geneLocation type="mitochondrion"/>
<organism>
    <name type="scientific">Jaculus jaculus</name>
    <name type="common">Lesser Egyptian jerboa</name>
    <dbReference type="NCBI Taxonomy" id="51337"/>
    <lineage>
        <taxon>Eukaryota</taxon>
        <taxon>Metazoa</taxon>
        <taxon>Chordata</taxon>
        <taxon>Craniata</taxon>
        <taxon>Vertebrata</taxon>
        <taxon>Euteleostomi</taxon>
        <taxon>Mammalia</taxon>
        <taxon>Eutheria</taxon>
        <taxon>Euarchontoglires</taxon>
        <taxon>Glires</taxon>
        <taxon>Rodentia</taxon>
        <taxon>Myomorpha</taxon>
        <taxon>Dipodoidea</taxon>
        <taxon>Dipodidae</taxon>
        <taxon>Dipodinae</taxon>
        <taxon>Jaculus</taxon>
    </lineage>
</organism>
<accession>Q710S3</accession>